<feature type="chain" id="PRO_0000057599" description="Gamma-crystallin E">
    <location>
        <begin position="1"/>
        <end position="174"/>
    </location>
</feature>
<feature type="domain" description="Beta/gamma crystallin 'Greek key' 1" evidence="1">
    <location>
        <begin position="2"/>
        <end position="40"/>
    </location>
</feature>
<feature type="domain" description="Beta/gamma crystallin 'Greek key' 2" evidence="1">
    <location>
        <begin position="41"/>
        <end position="83"/>
    </location>
</feature>
<feature type="domain" description="Beta/gamma crystallin 'Greek key' 3" evidence="1">
    <location>
        <begin position="88"/>
        <end position="128"/>
    </location>
</feature>
<feature type="domain" description="Beta/gamma crystallin 'Greek key' 4" evidence="1">
    <location>
        <begin position="129"/>
        <end position="171"/>
    </location>
</feature>
<feature type="region of interest" description="Connecting peptide">
    <location>
        <begin position="84"/>
        <end position="87"/>
    </location>
</feature>
<feature type="sequence conflict" description="In Ref. 2; CAA40990." evidence="3" ref="2">
    <original>E</original>
    <variation>Q</variation>
    <location>
        <position position="47"/>
    </location>
</feature>
<feature type="sequence conflict" description="In Ref. 1; AAA03228 and 2; CAA40990." evidence="3" ref="1 2">
    <original>A</original>
    <variation>T</variation>
    <location>
        <position position="52"/>
    </location>
</feature>
<feature type="sequence conflict" description="In Ref. 1; AAA03228." evidence="3" ref="1">
    <original>K</original>
    <variation>R</variation>
    <location>
        <position position="91"/>
    </location>
</feature>
<feature type="sequence conflict" description="In Ref. 1; AAA03228." evidence="3" ref="1">
    <original>S</original>
    <variation>P</variation>
    <location>
        <position position="110"/>
    </location>
</feature>
<keyword id="KW-0273">Eye lens protein</keyword>
<keyword id="KW-1185">Reference proteome</keyword>
<keyword id="KW-0677">Repeat</keyword>
<dbReference type="EMBL" id="K02584">
    <property type="protein sequence ID" value="AAA03228.1"/>
    <property type="molecule type" value="mRNA"/>
</dbReference>
<dbReference type="EMBL" id="X57855">
    <property type="protein sequence ID" value="CAA40990.1"/>
    <property type="molecule type" value="Genomic_DNA"/>
</dbReference>
<dbReference type="EMBL" id="AK014301">
    <property type="protein sequence ID" value="BAB29256.1"/>
    <property type="molecule type" value="mRNA"/>
</dbReference>
<dbReference type="EMBL" id="BC078417">
    <property type="protein sequence ID" value="AAH78417.1"/>
    <property type="molecule type" value="mRNA"/>
</dbReference>
<dbReference type="CCDS" id="CCDS35598.1"/>
<dbReference type="PIR" id="A02931">
    <property type="entry name" value="CYMSG2"/>
</dbReference>
<dbReference type="PIR" id="JS0596">
    <property type="entry name" value="JS0596"/>
</dbReference>
<dbReference type="PIR" id="S26811">
    <property type="entry name" value="S26811"/>
</dbReference>
<dbReference type="RefSeq" id="NP_031803.3">
    <property type="nucleotide sequence ID" value="NM_007777.3"/>
</dbReference>
<dbReference type="SMR" id="Q03740"/>
<dbReference type="BioGRID" id="198920">
    <property type="interactions" value="2"/>
</dbReference>
<dbReference type="FunCoup" id="Q03740">
    <property type="interactions" value="5"/>
</dbReference>
<dbReference type="STRING" id="10090.ENSMUSP00000084617"/>
<dbReference type="PaxDb" id="10090-ENSMUSP00000084617"/>
<dbReference type="ProteomicsDB" id="283955"/>
<dbReference type="DNASU" id="12968"/>
<dbReference type="Ensembl" id="ENSMUST00000087359.6">
    <property type="protein sequence ID" value="ENSMUSP00000084617.6"/>
    <property type="gene ID" value="ENSMUSG00000070870.7"/>
</dbReference>
<dbReference type="GeneID" id="12968"/>
<dbReference type="KEGG" id="mmu:12968"/>
<dbReference type="UCSC" id="uc007bhf.1">
    <property type="organism name" value="mouse"/>
</dbReference>
<dbReference type="AGR" id="MGI:88525"/>
<dbReference type="CTD" id="12968"/>
<dbReference type="MGI" id="MGI:88525">
    <property type="gene designation" value="Cryge"/>
</dbReference>
<dbReference type="VEuPathDB" id="HostDB:ENSMUSG00000070870"/>
<dbReference type="eggNOG" id="ENOG502RXJY">
    <property type="taxonomic scope" value="Eukaryota"/>
</dbReference>
<dbReference type="GeneTree" id="ENSGT00940000163272"/>
<dbReference type="HOGENOM" id="CLU_081883_1_1_1"/>
<dbReference type="InParanoid" id="Q03740"/>
<dbReference type="OMA" id="RFHFQEM"/>
<dbReference type="OrthoDB" id="8407241at2759"/>
<dbReference type="PhylomeDB" id="Q03740"/>
<dbReference type="BioGRID-ORCS" id="12968">
    <property type="hits" value="3 hits in 43 CRISPR screens"/>
</dbReference>
<dbReference type="ChiTaRS" id="Cryge">
    <property type="organism name" value="mouse"/>
</dbReference>
<dbReference type="PRO" id="PR:Q03740"/>
<dbReference type="Proteomes" id="UP000000589">
    <property type="component" value="Chromosome 1"/>
</dbReference>
<dbReference type="RNAct" id="Q03740">
    <property type="molecule type" value="protein"/>
</dbReference>
<dbReference type="Bgee" id="ENSMUSG00000070870">
    <property type="expression patterns" value="Expressed in lens of camera-type eye and 33 other cell types or tissues"/>
</dbReference>
<dbReference type="ExpressionAtlas" id="Q03740">
    <property type="expression patterns" value="baseline and differential"/>
</dbReference>
<dbReference type="GO" id="GO:0005212">
    <property type="term" value="F:structural constituent of eye lens"/>
    <property type="evidence" value="ECO:0007669"/>
    <property type="project" value="UniProtKB-KW"/>
</dbReference>
<dbReference type="GO" id="GO:0001654">
    <property type="term" value="P:eye development"/>
    <property type="evidence" value="ECO:0000315"/>
    <property type="project" value="MGI"/>
</dbReference>
<dbReference type="GO" id="GO:0002088">
    <property type="term" value="P:lens development in camera-type eye"/>
    <property type="evidence" value="ECO:0000315"/>
    <property type="project" value="MGI"/>
</dbReference>
<dbReference type="FunFam" id="2.60.20.10:FF:000001">
    <property type="entry name" value="Crystallin gamma S"/>
    <property type="match status" value="1"/>
</dbReference>
<dbReference type="FunFam" id="2.60.20.10:FF:000003">
    <property type="entry name" value="Crystallin gamma S"/>
    <property type="match status" value="1"/>
</dbReference>
<dbReference type="Gene3D" id="2.60.20.10">
    <property type="entry name" value="Crystallins"/>
    <property type="match status" value="2"/>
</dbReference>
<dbReference type="InterPro" id="IPR050252">
    <property type="entry name" value="Beta/Gamma-Crystallin"/>
</dbReference>
<dbReference type="InterPro" id="IPR001064">
    <property type="entry name" value="Beta/gamma_crystallin"/>
</dbReference>
<dbReference type="InterPro" id="IPR011024">
    <property type="entry name" value="G_crystallin-like"/>
</dbReference>
<dbReference type="PANTHER" id="PTHR11818">
    <property type="entry name" value="BETA/GAMMA CRYSTALLIN"/>
    <property type="match status" value="1"/>
</dbReference>
<dbReference type="PANTHER" id="PTHR11818:SF125">
    <property type="entry name" value="GAMMA-CRYSTALLIN E-RELATED"/>
    <property type="match status" value="1"/>
</dbReference>
<dbReference type="Pfam" id="PF00030">
    <property type="entry name" value="Crystall"/>
    <property type="match status" value="2"/>
</dbReference>
<dbReference type="PRINTS" id="PR01367">
    <property type="entry name" value="BGCRYSTALLIN"/>
</dbReference>
<dbReference type="SMART" id="SM00247">
    <property type="entry name" value="XTALbg"/>
    <property type="match status" value="2"/>
</dbReference>
<dbReference type="SUPFAM" id="SSF49695">
    <property type="entry name" value="gamma-Crystallin-like"/>
    <property type="match status" value="1"/>
</dbReference>
<dbReference type="PROSITE" id="PS50915">
    <property type="entry name" value="CRYSTALLIN_BETA_GAMMA"/>
    <property type="match status" value="4"/>
</dbReference>
<organism>
    <name type="scientific">Mus musculus</name>
    <name type="common">Mouse</name>
    <dbReference type="NCBI Taxonomy" id="10090"/>
    <lineage>
        <taxon>Eukaryota</taxon>
        <taxon>Metazoa</taxon>
        <taxon>Chordata</taxon>
        <taxon>Craniata</taxon>
        <taxon>Vertebrata</taxon>
        <taxon>Euteleostomi</taxon>
        <taxon>Mammalia</taxon>
        <taxon>Eutheria</taxon>
        <taxon>Euarchontoglires</taxon>
        <taxon>Glires</taxon>
        <taxon>Rodentia</taxon>
        <taxon>Myomorpha</taxon>
        <taxon>Muroidea</taxon>
        <taxon>Muridae</taxon>
        <taxon>Murinae</taxon>
        <taxon>Mus</taxon>
        <taxon>Mus</taxon>
    </lineage>
</organism>
<comment type="function">
    <text>Crystallins are the dominant structural components of the vertebrate eye lens.</text>
</comment>
<comment type="tissue specificity">
    <text evidence="2">Detected in the superior olivary complex of the auditory hindbrain.</text>
</comment>
<comment type="developmental stage">
    <text>In the embryo, expressed by day 12 of gestation. Maximum levels are found at day 30-40 followed by a rapid decline.</text>
</comment>
<comment type="domain">
    <text>Has a two-domain beta-structure, folded into four very similar Greek key motifs.</text>
</comment>
<comment type="miscellaneous">
    <text>There are six different gamma crystallins identified in mouse lens.</text>
</comment>
<comment type="similarity">
    <text evidence="3">Belongs to the beta/gamma-crystallin family.</text>
</comment>
<accession>Q03740</accession>
<accession>O89028</accession>
<accession>P26999</accession>
<accession>Q9CXK5</accession>
<gene>
    <name type="primary">Cryge</name>
</gene>
<proteinExistence type="evidence at transcript level"/>
<protein>
    <recommendedName>
        <fullName>Gamma-crystallin E</fullName>
    </recommendedName>
    <alternativeName>
        <fullName>Gamma-E-crystallin</fullName>
    </alternativeName>
</protein>
<name>CRGE_MOUSE</name>
<evidence type="ECO:0000255" key="1">
    <source>
        <dbReference type="PROSITE-ProRule" id="PRU00028"/>
    </source>
</evidence>
<evidence type="ECO:0000269" key="2">
    <source>
    </source>
</evidence>
<evidence type="ECO:0000305" key="3"/>
<sequence length="174" mass="21196">MGKITFYEDRGFQGRHYECSTDHSNLQPYFSRCNSVRVDSGCWMLYEQPNFAGCQYFLRRGDYPDYQQWMGFSDSVRSCRLIPHSSSHRIKIYEREDYRGQMVEITDDCSHLQDRFHFSDFHSFHVMEGYWVLYEMPNYRGRQYLLRPGEYRRYHDWGAMNARVGSLRRIMDFY</sequence>
<reference key="1">
    <citation type="journal article" date="1984" name="Proc. Natl. Acad. Sci. U.S.A.">
        <title>Gamma-crystallin family of the mouse lens: structural and evolutionary relationships.</title>
        <authorList>
            <person name="Breitman M.L."/>
            <person name="Lok S."/>
            <person name="Wistow G."/>
            <person name="Piatigorsky J."/>
            <person name="Treton J.A."/>
            <person name="Gold R.J.M."/>
            <person name="Tsui L.-C."/>
        </authorList>
    </citation>
    <scope>NUCLEOTIDE SEQUENCE [MRNA]</scope>
</reference>
<reference key="2">
    <citation type="journal article" date="1991" name="Gene">
        <title>Murine gamma E-crystallin is distinct from murine gamma 2-crystallin.</title>
        <authorList>
            <person name="Graw J."/>
            <person name="Coban L."/>
            <person name="Liebstein A."/>
            <person name="Werner T."/>
        </authorList>
    </citation>
    <scope>NUCLEOTIDE SEQUENCE [GENOMIC DNA]</scope>
    <source>
        <strain>(101/E1XC3H/E1)F1</strain>
        <tissue>Liver</tissue>
    </source>
</reference>
<reference key="3">
    <citation type="journal article" date="2005" name="Science">
        <title>The transcriptional landscape of the mammalian genome.</title>
        <authorList>
            <person name="Carninci P."/>
            <person name="Kasukawa T."/>
            <person name="Katayama S."/>
            <person name="Gough J."/>
            <person name="Frith M.C."/>
            <person name="Maeda N."/>
            <person name="Oyama R."/>
            <person name="Ravasi T."/>
            <person name="Lenhard B."/>
            <person name="Wells C."/>
            <person name="Kodzius R."/>
            <person name="Shimokawa K."/>
            <person name="Bajic V.B."/>
            <person name="Brenner S.E."/>
            <person name="Batalov S."/>
            <person name="Forrest A.R."/>
            <person name="Zavolan M."/>
            <person name="Davis M.J."/>
            <person name="Wilming L.G."/>
            <person name="Aidinis V."/>
            <person name="Allen J.E."/>
            <person name="Ambesi-Impiombato A."/>
            <person name="Apweiler R."/>
            <person name="Aturaliya R.N."/>
            <person name="Bailey T.L."/>
            <person name="Bansal M."/>
            <person name="Baxter L."/>
            <person name="Beisel K.W."/>
            <person name="Bersano T."/>
            <person name="Bono H."/>
            <person name="Chalk A.M."/>
            <person name="Chiu K.P."/>
            <person name="Choudhary V."/>
            <person name="Christoffels A."/>
            <person name="Clutterbuck D.R."/>
            <person name="Crowe M.L."/>
            <person name="Dalla E."/>
            <person name="Dalrymple B.P."/>
            <person name="de Bono B."/>
            <person name="Della Gatta G."/>
            <person name="di Bernardo D."/>
            <person name="Down T."/>
            <person name="Engstrom P."/>
            <person name="Fagiolini M."/>
            <person name="Faulkner G."/>
            <person name="Fletcher C.F."/>
            <person name="Fukushima T."/>
            <person name="Furuno M."/>
            <person name="Futaki S."/>
            <person name="Gariboldi M."/>
            <person name="Georgii-Hemming P."/>
            <person name="Gingeras T.R."/>
            <person name="Gojobori T."/>
            <person name="Green R.E."/>
            <person name="Gustincich S."/>
            <person name="Harbers M."/>
            <person name="Hayashi Y."/>
            <person name="Hensch T.K."/>
            <person name="Hirokawa N."/>
            <person name="Hill D."/>
            <person name="Huminiecki L."/>
            <person name="Iacono M."/>
            <person name="Ikeo K."/>
            <person name="Iwama A."/>
            <person name="Ishikawa T."/>
            <person name="Jakt M."/>
            <person name="Kanapin A."/>
            <person name="Katoh M."/>
            <person name="Kawasawa Y."/>
            <person name="Kelso J."/>
            <person name="Kitamura H."/>
            <person name="Kitano H."/>
            <person name="Kollias G."/>
            <person name="Krishnan S.P."/>
            <person name="Kruger A."/>
            <person name="Kummerfeld S.K."/>
            <person name="Kurochkin I.V."/>
            <person name="Lareau L.F."/>
            <person name="Lazarevic D."/>
            <person name="Lipovich L."/>
            <person name="Liu J."/>
            <person name="Liuni S."/>
            <person name="McWilliam S."/>
            <person name="Madan Babu M."/>
            <person name="Madera M."/>
            <person name="Marchionni L."/>
            <person name="Matsuda H."/>
            <person name="Matsuzawa S."/>
            <person name="Miki H."/>
            <person name="Mignone F."/>
            <person name="Miyake S."/>
            <person name="Morris K."/>
            <person name="Mottagui-Tabar S."/>
            <person name="Mulder N."/>
            <person name="Nakano N."/>
            <person name="Nakauchi H."/>
            <person name="Ng P."/>
            <person name="Nilsson R."/>
            <person name="Nishiguchi S."/>
            <person name="Nishikawa S."/>
            <person name="Nori F."/>
            <person name="Ohara O."/>
            <person name="Okazaki Y."/>
            <person name="Orlando V."/>
            <person name="Pang K.C."/>
            <person name="Pavan W.J."/>
            <person name="Pavesi G."/>
            <person name="Pesole G."/>
            <person name="Petrovsky N."/>
            <person name="Piazza S."/>
            <person name="Reed J."/>
            <person name="Reid J.F."/>
            <person name="Ring B.Z."/>
            <person name="Ringwald M."/>
            <person name="Rost B."/>
            <person name="Ruan Y."/>
            <person name="Salzberg S.L."/>
            <person name="Sandelin A."/>
            <person name="Schneider C."/>
            <person name="Schoenbach C."/>
            <person name="Sekiguchi K."/>
            <person name="Semple C.A."/>
            <person name="Seno S."/>
            <person name="Sessa L."/>
            <person name="Sheng Y."/>
            <person name="Shibata Y."/>
            <person name="Shimada H."/>
            <person name="Shimada K."/>
            <person name="Silva D."/>
            <person name="Sinclair B."/>
            <person name="Sperling S."/>
            <person name="Stupka E."/>
            <person name="Sugiura K."/>
            <person name="Sultana R."/>
            <person name="Takenaka Y."/>
            <person name="Taki K."/>
            <person name="Tammoja K."/>
            <person name="Tan S.L."/>
            <person name="Tang S."/>
            <person name="Taylor M.S."/>
            <person name="Tegner J."/>
            <person name="Teichmann S.A."/>
            <person name="Ueda H.R."/>
            <person name="van Nimwegen E."/>
            <person name="Verardo R."/>
            <person name="Wei C.L."/>
            <person name="Yagi K."/>
            <person name="Yamanishi H."/>
            <person name="Zabarovsky E."/>
            <person name="Zhu S."/>
            <person name="Zimmer A."/>
            <person name="Hide W."/>
            <person name="Bult C."/>
            <person name="Grimmond S.M."/>
            <person name="Teasdale R.D."/>
            <person name="Liu E.T."/>
            <person name="Brusic V."/>
            <person name="Quackenbush J."/>
            <person name="Wahlestedt C."/>
            <person name="Mattick J.S."/>
            <person name="Hume D.A."/>
            <person name="Kai C."/>
            <person name="Sasaki D."/>
            <person name="Tomaru Y."/>
            <person name="Fukuda S."/>
            <person name="Kanamori-Katayama M."/>
            <person name="Suzuki M."/>
            <person name="Aoki J."/>
            <person name="Arakawa T."/>
            <person name="Iida J."/>
            <person name="Imamura K."/>
            <person name="Itoh M."/>
            <person name="Kato T."/>
            <person name="Kawaji H."/>
            <person name="Kawagashira N."/>
            <person name="Kawashima T."/>
            <person name="Kojima M."/>
            <person name="Kondo S."/>
            <person name="Konno H."/>
            <person name="Nakano K."/>
            <person name="Ninomiya N."/>
            <person name="Nishio T."/>
            <person name="Okada M."/>
            <person name="Plessy C."/>
            <person name="Shibata K."/>
            <person name="Shiraki T."/>
            <person name="Suzuki S."/>
            <person name="Tagami M."/>
            <person name="Waki K."/>
            <person name="Watahiki A."/>
            <person name="Okamura-Oho Y."/>
            <person name="Suzuki H."/>
            <person name="Kawai J."/>
            <person name="Hayashizaki Y."/>
        </authorList>
    </citation>
    <scope>NUCLEOTIDE SEQUENCE [LARGE SCALE MRNA]</scope>
    <source>
        <strain>C57BL/6J</strain>
        <tissue>Embryonic head</tissue>
    </source>
</reference>
<reference key="4">
    <citation type="journal article" date="2004" name="Genome Res.">
        <title>The status, quality, and expansion of the NIH full-length cDNA project: the Mammalian Gene Collection (MGC).</title>
        <authorList>
            <consortium name="The MGC Project Team"/>
        </authorList>
    </citation>
    <scope>NUCLEOTIDE SEQUENCE [LARGE SCALE MRNA]</scope>
    <source>
        <strain>C57BL/6J</strain>
        <tissue>Brain</tissue>
    </source>
</reference>
<reference key="5">
    <citation type="journal article" date="2016" name="PLoS ONE">
        <title>Functional Role of gamma-Crystallin N in the Auditory Hindbrain.</title>
        <authorList>
            <person name="Hartwich H."/>
            <person name="Rosengauer E."/>
            <person name="Ruettiger L."/>
            <person name="Wilms V."/>
            <person name="Waterholter S.K."/>
            <person name="Nothwang H.G."/>
        </authorList>
    </citation>
    <scope>TISSUE SPECIFICITY</scope>
</reference>